<keyword id="KW-0030">Aminoacyl-tRNA synthetase</keyword>
<keyword id="KW-0067">ATP-binding</keyword>
<keyword id="KW-0963">Cytoplasm</keyword>
<keyword id="KW-0436">Ligase</keyword>
<keyword id="KW-0547">Nucleotide-binding</keyword>
<keyword id="KW-0648">Protein biosynthesis</keyword>
<sequence length="457" mass="50828">MTVTVRFAPSPTGYIHIGNTRTALSNWLYASKNNGKFILRYDDTDVERSKDEYAQAIAVDLDWLGVRPDRVEYQSKRFDIYAKAVEKLKTAGLLYACYETADELERRRKFRLARRLPPVYGREALKLTDAEKAALEAEGRKPHWRFLLPNFESDPFATQRTEVHWDDLVRGPQTVDLASMSDPILVREDGTYLYTLPSVVDDIDMGVTHIIRGDDHVTNTGVQISIFKALGATPPVFGHHNLLTTISGEGLSKRTGALSVGSLREAGYEPMAVASLAILIGTSESVTAAPDMAALAEHFDLASISKSSAKFDPSELDALNRSLLHEMPFEKAKPRLEALGICGAKAESFWLAVRGNLDRFSDVSHWWQVVSGDLPEAPDLSGEDRDFVRHAFDLLPPEPWNGQTWKSWTEAVKSATGRKGKNLFMPLRLALTGQAHGPELADLLVLVGLERTKSRRP</sequence>
<gene>
    <name evidence="1" type="primary">gltX1</name>
    <name type="ordered locus">BAbS19_I09600</name>
</gene>
<feature type="chain" id="PRO_0000367621" description="Glutamate--tRNA ligase 1">
    <location>
        <begin position="1"/>
        <end position="457"/>
    </location>
</feature>
<feature type="short sequence motif" description="'HIGH' region" evidence="1">
    <location>
        <begin position="9"/>
        <end position="19"/>
    </location>
</feature>
<feature type="short sequence motif" description="'KMSKS' region" evidence="1">
    <location>
        <begin position="250"/>
        <end position="254"/>
    </location>
</feature>
<feature type="binding site" evidence="1">
    <location>
        <position position="253"/>
    </location>
    <ligand>
        <name>ATP</name>
        <dbReference type="ChEBI" id="CHEBI:30616"/>
    </ligand>
</feature>
<organism>
    <name type="scientific">Brucella abortus (strain S19)</name>
    <dbReference type="NCBI Taxonomy" id="430066"/>
    <lineage>
        <taxon>Bacteria</taxon>
        <taxon>Pseudomonadati</taxon>
        <taxon>Pseudomonadota</taxon>
        <taxon>Alphaproteobacteria</taxon>
        <taxon>Hyphomicrobiales</taxon>
        <taxon>Brucellaceae</taxon>
        <taxon>Brucella/Ochrobactrum group</taxon>
        <taxon>Brucella</taxon>
    </lineage>
</organism>
<dbReference type="EC" id="6.1.1.17" evidence="1"/>
<dbReference type="EMBL" id="CP000887">
    <property type="protein sequence ID" value="ACD72475.1"/>
    <property type="molecule type" value="Genomic_DNA"/>
</dbReference>
<dbReference type="SMR" id="B2S5M8"/>
<dbReference type="KEGG" id="bmc:BAbS19_I09600"/>
<dbReference type="HOGENOM" id="CLU_015768_6_1_5"/>
<dbReference type="Proteomes" id="UP000002565">
    <property type="component" value="Chromosome 1"/>
</dbReference>
<dbReference type="GO" id="GO:0005737">
    <property type="term" value="C:cytoplasm"/>
    <property type="evidence" value="ECO:0007669"/>
    <property type="project" value="UniProtKB-SubCell"/>
</dbReference>
<dbReference type="GO" id="GO:0005524">
    <property type="term" value="F:ATP binding"/>
    <property type="evidence" value="ECO:0007669"/>
    <property type="project" value="UniProtKB-UniRule"/>
</dbReference>
<dbReference type="GO" id="GO:0004818">
    <property type="term" value="F:glutamate-tRNA ligase activity"/>
    <property type="evidence" value="ECO:0007669"/>
    <property type="project" value="UniProtKB-UniRule"/>
</dbReference>
<dbReference type="GO" id="GO:0000049">
    <property type="term" value="F:tRNA binding"/>
    <property type="evidence" value="ECO:0007669"/>
    <property type="project" value="InterPro"/>
</dbReference>
<dbReference type="GO" id="GO:0008270">
    <property type="term" value="F:zinc ion binding"/>
    <property type="evidence" value="ECO:0007669"/>
    <property type="project" value="InterPro"/>
</dbReference>
<dbReference type="GO" id="GO:0006424">
    <property type="term" value="P:glutamyl-tRNA aminoacylation"/>
    <property type="evidence" value="ECO:0007669"/>
    <property type="project" value="UniProtKB-UniRule"/>
</dbReference>
<dbReference type="CDD" id="cd00808">
    <property type="entry name" value="GluRS_core"/>
    <property type="match status" value="1"/>
</dbReference>
<dbReference type="Gene3D" id="1.10.10.350">
    <property type="match status" value="1"/>
</dbReference>
<dbReference type="Gene3D" id="3.40.50.620">
    <property type="entry name" value="HUPs"/>
    <property type="match status" value="1"/>
</dbReference>
<dbReference type="HAMAP" id="MF_00022">
    <property type="entry name" value="Glu_tRNA_synth_type1"/>
    <property type="match status" value="1"/>
</dbReference>
<dbReference type="InterPro" id="IPR045462">
    <property type="entry name" value="aa-tRNA-synth_I_cd-bd"/>
</dbReference>
<dbReference type="InterPro" id="IPR020751">
    <property type="entry name" value="aa-tRNA-synth_I_codon-bd_sub2"/>
</dbReference>
<dbReference type="InterPro" id="IPR001412">
    <property type="entry name" value="aa-tRNA-synth_I_CS"/>
</dbReference>
<dbReference type="InterPro" id="IPR008925">
    <property type="entry name" value="aa_tRNA-synth_I_cd-bd_sf"/>
</dbReference>
<dbReference type="InterPro" id="IPR004527">
    <property type="entry name" value="Glu-tRNA-ligase_bac/mito"/>
</dbReference>
<dbReference type="InterPro" id="IPR000924">
    <property type="entry name" value="Glu/Gln-tRNA-synth"/>
</dbReference>
<dbReference type="InterPro" id="IPR020058">
    <property type="entry name" value="Glu/Gln-tRNA-synth_Ib_cat-dom"/>
</dbReference>
<dbReference type="InterPro" id="IPR049940">
    <property type="entry name" value="GluQ/Sye"/>
</dbReference>
<dbReference type="InterPro" id="IPR033910">
    <property type="entry name" value="GluRS_core"/>
</dbReference>
<dbReference type="InterPro" id="IPR014729">
    <property type="entry name" value="Rossmann-like_a/b/a_fold"/>
</dbReference>
<dbReference type="NCBIfam" id="TIGR00464">
    <property type="entry name" value="gltX_bact"/>
    <property type="match status" value="1"/>
</dbReference>
<dbReference type="PANTHER" id="PTHR43311">
    <property type="entry name" value="GLUTAMATE--TRNA LIGASE"/>
    <property type="match status" value="1"/>
</dbReference>
<dbReference type="PANTHER" id="PTHR43311:SF2">
    <property type="entry name" value="GLUTAMATE--TRNA LIGASE, MITOCHONDRIAL-RELATED"/>
    <property type="match status" value="1"/>
</dbReference>
<dbReference type="Pfam" id="PF19269">
    <property type="entry name" value="Anticodon_2"/>
    <property type="match status" value="1"/>
</dbReference>
<dbReference type="Pfam" id="PF00749">
    <property type="entry name" value="tRNA-synt_1c"/>
    <property type="match status" value="1"/>
</dbReference>
<dbReference type="PRINTS" id="PR00987">
    <property type="entry name" value="TRNASYNTHGLU"/>
</dbReference>
<dbReference type="SUPFAM" id="SSF48163">
    <property type="entry name" value="An anticodon-binding domain of class I aminoacyl-tRNA synthetases"/>
    <property type="match status" value="1"/>
</dbReference>
<dbReference type="SUPFAM" id="SSF52374">
    <property type="entry name" value="Nucleotidylyl transferase"/>
    <property type="match status" value="1"/>
</dbReference>
<dbReference type="PROSITE" id="PS00178">
    <property type="entry name" value="AA_TRNA_LIGASE_I"/>
    <property type="match status" value="1"/>
</dbReference>
<evidence type="ECO:0000255" key="1">
    <source>
        <dbReference type="HAMAP-Rule" id="MF_00022"/>
    </source>
</evidence>
<proteinExistence type="inferred from homology"/>
<protein>
    <recommendedName>
        <fullName evidence="1">Glutamate--tRNA ligase 1</fullName>
        <ecNumber evidence="1">6.1.1.17</ecNumber>
    </recommendedName>
    <alternativeName>
        <fullName evidence="1">Glutamyl-tRNA synthetase 1</fullName>
        <shortName evidence="1">GluRS 1</shortName>
    </alternativeName>
</protein>
<reference key="1">
    <citation type="journal article" date="2008" name="PLoS ONE">
        <title>Genome sequence of Brucella abortus vaccine strain S19 compared to virulent strains yields candidate virulence genes.</title>
        <authorList>
            <person name="Crasta O.R."/>
            <person name="Folkerts O."/>
            <person name="Fei Z."/>
            <person name="Mane S.P."/>
            <person name="Evans C."/>
            <person name="Martino-Catt S."/>
            <person name="Bricker B."/>
            <person name="Yu G."/>
            <person name="Du L."/>
            <person name="Sobral B.W."/>
        </authorList>
    </citation>
    <scope>NUCLEOTIDE SEQUENCE [LARGE SCALE GENOMIC DNA]</scope>
    <source>
        <strain>S19</strain>
    </source>
</reference>
<comment type="function">
    <text evidence="1">Catalyzes the attachment of glutamate to tRNA(Glu) in a two-step reaction: glutamate is first activated by ATP to form Glu-AMP and then transferred to the acceptor end of tRNA(Glu).</text>
</comment>
<comment type="catalytic activity">
    <reaction evidence="1">
        <text>tRNA(Glu) + L-glutamate + ATP = L-glutamyl-tRNA(Glu) + AMP + diphosphate</text>
        <dbReference type="Rhea" id="RHEA:23540"/>
        <dbReference type="Rhea" id="RHEA-COMP:9663"/>
        <dbReference type="Rhea" id="RHEA-COMP:9680"/>
        <dbReference type="ChEBI" id="CHEBI:29985"/>
        <dbReference type="ChEBI" id="CHEBI:30616"/>
        <dbReference type="ChEBI" id="CHEBI:33019"/>
        <dbReference type="ChEBI" id="CHEBI:78442"/>
        <dbReference type="ChEBI" id="CHEBI:78520"/>
        <dbReference type="ChEBI" id="CHEBI:456215"/>
        <dbReference type="EC" id="6.1.1.17"/>
    </reaction>
</comment>
<comment type="subunit">
    <text evidence="1">Monomer.</text>
</comment>
<comment type="subcellular location">
    <subcellularLocation>
        <location evidence="1">Cytoplasm</location>
    </subcellularLocation>
</comment>
<comment type="similarity">
    <text evidence="1">Belongs to the class-I aminoacyl-tRNA synthetase family. Glutamate--tRNA ligase type 1 subfamily.</text>
</comment>
<name>SYE1_BRUA1</name>
<accession>B2S5M8</accession>